<protein>
    <recommendedName>
        <fullName>Uncharacterized protein L688</fullName>
    </recommendedName>
</protein>
<keyword id="KW-1185">Reference proteome</keyword>
<keyword id="KW-0946">Virion</keyword>
<name>YL688_MIMIV</name>
<reference key="1">
    <citation type="journal article" date="2004" name="Science">
        <title>The 1.2-megabase genome sequence of Mimivirus.</title>
        <authorList>
            <person name="Raoult D."/>
            <person name="Audic S."/>
            <person name="Robert C."/>
            <person name="Abergel C."/>
            <person name="Renesto P."/>
            <person name="Ogata H."/>
            <person name="La Scola B."/>
            <person name="Susan M."/>
            <person name="Claverie J.-M."/>
        </authorList>
    </citation>
    <scope>NUCLEOTIDE SEQUENCE [LARGE SCALE GENOMIC DNA]</scope>
    <source>
        <strain>Rowbotham-Bradford</strain>
    </source>
</reference>
<reference key="2">
    <citation type="journal article" date="2006" name="J. Virol.">
        <title>Mimivirus giant particles incorporate a large fraction of anonymous and unique gene products.</title>
        <authorList>
            <person name="Renesto P."/>
            <person name="Abergel C."/>
            <person name="Decloquement P."/>
            <person name="Moinier D."/>
            <person name="Azza S."/>
            <person name="Ogata H."/>
            <person name="Fourquet P."/>
            <person name="Gorvel J.-P."/>
            <person name="Claverie J.-M."/>
            <person name="Raoult D."/>
        </authorList>
    </citation>
    <scope>IDENTIFICATION BY MASS SPECTROMETRY [LARGE SCALE ANALYSIS]</scope>
    <scope>SUBCELLULAR LOCATION</scope>
</reference>
<gene>
    <name type="ordered locus">MIMI_L688</name>
</gene>
<dbReference type="EMBL" id="AY653733">
    <property type="protein sequence ID" value="AAV50949.1"/>
    <property type="molecule type" value="Genomic_DNA"/>
</dbReference>
<dbReference type="SMR" id="Q5UNV2"/>
<dbReference type="KEGG" id="vg:9925339"/>
<dbReference type="OrthoDB" id="32741at10239"/>
<dbReference type="Proteomes" id="UP000001134">
    <property type="component" value="Genome"/>
</dbReference>
<dbReference type="GO" id="GO:0044423">
    <property type="term" value="C:virion component"/>
    <property type="evidence" value="ECO:0007669"/>
    <property type="project" value="UniProtKB-KW"/>
</dbReference>
<dbReference type="Gene3D" id="2.60.120.40">
    <property type="match status" value="1"/>
</dbReference>
<dbReference type="InterPro" id="IPR008983">
    <property type="entry name" value="Tumour_necrosis_fac-like_dom"/>
</dbReference>
<feature type="chain" id="PRO_0000071319" description="Uncharacterized protein L688">
    <location>
        <begin position="1"/>
        <end position="236"/>
    </location>
</feature>
<sequence length="236" mass="25119">MYLFYQLILEIFQIMSCQNYQSYGCGTYPCVTYGNCYTTCASPCLPYPTNCVQVCTSSQPCPSPCPIPVPCPVTIVEYITTAPTATTIESSPTGMALTPIPVGSTSIPSGTVTVITGYAATPVRSIGGITLNSALGQFTVPLAGSYLITGYIGFSYNAVGIREVYVYKVDGATSVITLISTDSRNTTATNPTYISYSAMDYFNAGDRIFIAAAQNSGSTITTTADNRIAITRMNRQ</sequence>
<organismHost>
    <name type="scientific">Acanthamoeba polyphaga</name>
    <name type="common">Amoeba</name>
    <dbReference type="NCBI Taxonomy" id="5757"/>
</organismHost>
<proteinExistence type="evidence at protein level"/>
<comment type="subcellular location">
    <subcellularLocation>
        <location evidence="1">Virion</location>
    </subcellularLocation>
</comment>
<accession>Q5UNV2</accession>
<evidence type="ECO:0000269" key="1">
    <source>
    </source>
</evidence>
<organism>
    <name type="scientific">Acanthamoeba polyphaga mimivirus</name>
    <name type="common">APMV</name>
    <dbReference type="NCBI Taxonomy" id="212035"/>
    <lineage>
        <taxon>Viruses</taxon>
        <taxon>Varidnaviria</taxon>
        <taxon>Bamfordvirae</taxon>
        <taxon>Nucleocytoviricota</taxon>
        <taxon>Megaviricetes</taxon>
        <taxon>Imitervirales</taxon>
        <taxon>Mimiviridae</taxon>
        <taxon>Megamimivirinae</taxon>
        <taxon>Mimivirus</taxon>
        <taxon>Mimivirus bradfordmassiliense</taxon>
    </lineage>
</organism>